<comment type="function">
    <text evidence="3 5 6 7 9 10 11 12 13 14">Component of the DASH complex that connects microtubules with kinetochores and couples microtubule depolymerisation to chromosome movement; it is involved in retrieving kinetochores to the spindle poles before their re-orientation on the spindle in early mitosis and allows microtubule depolymerization to pull chromosomes apart and resist detachment during anaphase (PubMed:15664196, PubMed:16415853, PubMed:16777964, PubMed:17460120, PubMed:17643123). Kinetochores, consisting of a centromere-associated inner segment and a microtubule-contacting outer segment, play a crucial role in chromosome segregation by mediating the physical connection between centromeric DNA and microtubules (PubMed:15664196, PubMed:16415853, PubMed:16777964, PubMed:17460120). Kinetochores also serve as an input point for the spindle assembly checkpoint, which delays anaphase until all chromosomes have bioriented on the mitotic spindle (PubMed:12408861). During spindle-kinetochore attachment, kinetochores first attach to the lateral surface of spindle microtubules, which supports the congression of chromosomes toward the middle of the dividing cell; they then slide along towards the spindle pole, a process independent of the DASH complex but requiring the NDC80 complex (PubMed:25236177). When the end of a disassembling microtubule reaches the laterally attached kinetochore, the DASH complex together with the NDC80 complex and STU2 convert lateral attachment to end-on capture to produce a structure that can track with microtubule shortening and sustain attachment when tension is applied across sister kinetochores upon their biorientation (PubMed:15640796, PubMed:15664196, PubMed:25236177). Microtubule depolymerization proceeds by protofilament splaying and induces the kinetochore-attached DASH complex to slide longitudinally, thereby helping to transduce depolymerization energy into pulling forces to disjoin chromatids (PubMed:16415853, PubMed:16777964). Incorrect microtubule attachments are corrected by releasing microubules from the kinetochore through phosphorylation by IPL1 of kinetochore components (PubMed:12408861). Links the microtubule cytoskeleton to chromosomes during interphase (PubMed:36701236). Also contributes to the poleward transport of kinetochores on microtubules following centromeric DNA replication in S-phase (PubMed:18079178).</text>
</comment>
<comment type="subunit">
    <text evidence="1 4 5 8 10 11 13">Component of the DASH complex consisting of ASK1, DAD1, DAD2, DAD3, DAD4, DAM1, DUO1, HSK3, SPC19 and SPC34, with a stoichiometry of one copy of each subunit per complex (PubMed:15632076, PubMed:15640796, PubMed:16715078, PubMed:17460120, PubMed:17643123, PubMed:25236177). Multiple DASH complexes oligomerize to form a ring that encircles spindle microtubules and organizes the rod-like NDC80 complexes of the outer kinetochore (PubMed:16715078, PubMed:17460120, PubMed:17643123, PubMed:25236177). DASH complex oligomerization strengthens microtubule attachments (PubMed:25236177). On cytoplasmic microtubules, DASH complexes appear to form patches instead of rings (By similarity).</text>
</comment>
<comment type="subcellular location">
    <subcellularLocation>
        <location evidence="16">Nucleus</location>
    </subcellularLocation>
    <subcellularLocation>
        <location evidence="16">Cytoplasm</location>
        <location evidence="16">Cytoskeleton</location>
        <location evidence="16">Spindle</location>
    </subcellularLocation>
    <subcellularLocation>
        <location evidence="16">Chromosome</location>
        <location evidence="16">Centromere</location>
        <location evidence="16">Kinetochore</location>
    </subcellularLocation>
    <text>Associates with the mitotic spindle and the kinetochore.</text>
</comment>
<comment type="disruption phenotype">
    <text evidence="13">Degron-mediated knockdown disrupts oligomerization of the DASH complex and leads to defective sister kinetochore biorientation and mitotic arrest with large buds.</text>
</comment>
<comment type="similarity">
    <text evidence="15">Belongs to the DASH complex HSK3 family.</text>
</comment>
<protein>
    <recommendedName>
        <fullName>DASH complex subunit HSK3</fullName>
    </recommendedName>
    <alternativeName>
        <fullName>Helper of ASK1 protein 3</fullName>
    </alternativeName>
    <alternativeName>
        <fullName>Outer kinetochore protein HSK3</fullName>
    </alternativeName>
</protein>
<evidence type="ECO:0000250" key="1">
    <source>
        <dbReference type="UniProtKB" id="O94483"/>
    </source>
</evidence>
<evidence type="ECO:0000255" key="2"/>
<evidence type="ECO:0000269" key="3">
    <source>
    </source>
</evidence>
<evidence type="ECO:0000269" key="4">
    <source>
    </source>
</evidence>
<evidence type="ECO:0000269" key="5">
    <source>
    </source>
</evidence>
<evidence type="ECO:0000269" key="6">
    <source>
    </source>
</evidence>
<evidence type="ECO:0000269" key="7">
    <source>
    </source>
</evidence>
<evidence type="ECO:0000269" key="8">
    <source>
    </source>
</evidence>
<evidence type="ECO:0000269" key="9">
    <source>
    </source>
</evidence>
<evidence type="ECO:0000269" key="10">
    <source>
    </source>
</evidence>
<evidence type="ECO:0000269" key="11">
    <source>
    </source>
</evidence>
<evidence type="ECO:0000269" key="12">
    <source>
    </source>
</evidence>
<evidence type="ECO:0000269" key="13">
    <source>
    </source>
</evidence>
<evidence type="ECO:0000269" key="14">
    <source>
    </source>
</evidence>
<evidence type="ECO:0000305" key="15"/>
<evidence type="ECO:0000305" key="16">
    <source>
    </source>
</evidence>
<reference key="1">
    <citation type="journal article" date="1994" name="Nature">
        <title>Complete DNA sequence of yeast chromosome XI.</title>
        <authorList>
            <person name="Dujon B."/>
            <person name="Alexandraki D."/>
            <person name="Andre B."/>
            <person name="Ansorge W."/>
            <person name="Baladron V."/>
            <person name="Ballesta J.P.G."/>
            <person name="Banrevi A."/>
            <person name="Bolle P.-A."/>
            <person name="Bolotin-Fukuhara M."/>
            <person name="Bossier P."/>
            <person name="Bou G."/>
            <person name="Boyer J."/>
            <person name="Buitrago M.J."/>
            <person name="Cheret G."/>
            <person name="Colleaux L."/>
            <person name="Daignan-Fornier B."/>
            <person name="del Rey F."/>
            <person name="Dion C."/>
            <person name="Domdey H."/>
            <person name="Duesterhoeft A."/>
            <person name="Duesterhus S."/>
            <person name="Entian K.-D."/>
            <person name="Erfle H."/>
            <person name="Esteban P.F."/>
            <person name="Feldmann H."/>
            <person name="Fernandes L."/>
            <person name="Fobo G.M."/>
            <person name="Fritz C."/>
            <person name="Fukuhara H."/>
            <person name="Gabel C."/>
            <person name="Gaillon L."/>
            <person name="Garcia-Cantalejo J.M."/>
            <person name="Garcia-Ramirez J.J."/>
            <person name="Gent M.E."/>
            <person name="Ghazvini M."/>
            <person name="Goffeau A."/>
            <person name="Gonzalez A."/>
            <person name="Grothues D."/>
            <person name="Guerreiro P."/>
            <person name="Hegemann J.H."/>
            <person name="Hewitt N."/>
            <person name="Hilger F."/>
            <person name="Hollenberg C.P."/>
            <person name="Horaitis O."/>
            <person name="Indge K.J."/>
            <person name="Jacquier A."/>
            <person name="James C.M."/>
            <person name="Jauniaux J.-C."/>
            <person name="Jimenez A."/>
            <person name="Keuchel H."/>
            <person name="Kirchrath L."/>
            <person name="Kleine K."/>
            <person name="Koetter P."/>
            <person name="Legrain P."/>
            <person name="Liebl S."/>
            <person name="Louis E.J."/>
            <person name="Maia e Silva A."/>
            <person name="Marck C."/>
            <person name="Monnier A.-L."/>
            <person name="Moestl D."/>
            <person name="Mueller S."/>
            <person name="Obermaier B."/>
            <person name="Oliver S.G."/>
            <person name="Pallier C."/>
            <person name="Pascolo S."/>
            <person name="Pfeiffer F."/>
            <person name="Philippsen P."/>
            <person name="Planta R.J."/>
            <person name="Pohl F.M."/>
            <person name="Pohl T.M."/>
            <person name="Poehlmann R."/>
            <person name="Portetelle D."/>
            <person name="Purnelle B."/>
            <person name="Puzos V."/>
            <person name="Ramezani Rad M."/>
            <person name="Rasmussen S.W."/>
            <person name="Remacha M.A."/>
            <person name="Revuelta J.L."/>
            <person name="Richard G.-F."/>
            <person name="Rieger M."/>
            <person name="Rodrigues-Pousada C."/>
            <person name="Rose M."/>
            <person name="Rupp T."/>
            <person name="Santos M.A."/>
            <person name="Schwager C."/>
            <person name="Sensen C."/>
            <person name="Skala J."/>
            <person name="Soares H."/>
            <person name="Sor F."/>
            <person name="Stegemann J."/>
            <person name="Tettelin H."/>
            <person name="Thierry A."/>
            <person name="Tzermia M."/>
            <person name="Urrestarazu L.A."/>
            <person name="van Dyck L."/>
            <person name="van Vliet-Reedijk J.C."/>
            <person name="Valens M."/>
            <person name="Vandenbol M."/>
            <person name="Vilela C."/>
            <person name="Vissers S."/>
            <person name="von Wettstein D."/>
            <person name="Voss H."/>
            <person name="Wiemann S."/>
            <person name="Xu G."/>
            <person name="Zimmermann J."/>
            <person name="Haasemann M."/>
            <person name="Becker I."/>
            <person name="Mewes H.-W."/>
        </authorList>
    </citation>
    <scope>NUCLEOTIDE SEQUENCE [LARGE SCALE GENOMIC DNA]</scope>
    <source>
        <strain>ATCC 204508 / S288c</strain>
    </source>
</reference>
<reference key="2">
    <citation type="journal article" date="2014" name="G3 (Bethesda)">
        <title>The reference genome sequence of Saccharomyces cerevisiae: Then and now.</title>
        <authorList>
            <person name="Engel S.R."/>
            <person name="Dietrich F.S."/>
            <person name="Fisk D.G."/>
            <person name="Binkley G."/>
            <person name="Balakrishnan R."/>
            <person name="Costanzo M.C."/>
            <person name="Dwight S.S."/>
            <person name="Hitz B.C."/>
            <person name="Karra K."/>
            <person name="Nash R.S."/>
            <person name="Weng S."/>
            <person name="Wong E.D."/>
            <person name="Lloyd P."/>
            <person name="Skrzypek M.S."/>
            <person name="Miyasato S.R."/>
            <person name="Simison M."/>
            <person name="Cherry J.M."/>
        </authorList>
    </citation>
    <scope>GENOME REANNOTATION</scope>
    <source>
        <strain>ATCC 204508 / S288c</strain>
    </source>
</reference>
<reference key="3">
    <citation type="journal article" date="2002" name="Cell">
        <title>Phospho-regulation of kinetochore-microtubule attachments by the Aurora kinase Ipl1p.</title>
        <authorList>
            <person name="Cheeseman I.M."/>
            <person name="Anderson S."/>
            <person name="Jwa M."/>
            <person name="Green E.M."/>
            <person name="Kang J.-S."/>
            <person name="Yates J.R. III"/>
            <person name="Chan C.S.M."/>
            <person name="Drubin D.G."/>
            <person name="Barnes G."/>
        </authorList>
    </citation>
    <scope>FUNCTION</scope>
</reference>
<reference key="4">
    <citation type="journal article" date="2005" name="Mol. Cell. Biol.">
        <title>Genetic analysis of the kinetochore DASH complex reveals an antagonistic relationship with the ras/protein kinase A pathway and a novel subunit required for Ask1 association.</title>
        <authorList>
            <person name="Li J.-M."/>
            <person name="Li Y."/>
            <person name="Elledge S.J."/>
        </authorList>
    </citation>
    <scope>IDENTIFICATION IN THE DASH COMPLEX</scope>
</reference>
<reference key="5">
    <citation type="journal article" date="2005" name="Mol. Cell">
        <title>Formation of a dynamic kinetochore-microtubule interface through assembly of the Dam1 ring complex.</title>
        <authorList>
            <person name="Westermann S."/>
            <person name="Avila-Sakar A."/>
            <person name="Wang H.-W."/>
            <person name="Niederstrasser H."/>
            <person name="Wong J."/>
            <person name="Drubin D.G."/>
            <person name="Nogales E."/>
            <person name="Barnes G."/>
        </authorList>
    </citation>
    <scope>FUNCTION</scope>
</reference>
<reference key="6">
    <citation type="journal article" date="2006" name="Nature">
        <title>The Dam1 kinetochore ring complex moves processively on depolymerizing microtubule ends.</title>
        <authorList>
            <person name="Westermann S."/>
            <person name="Wang H.-W."/>
            <person name="Avila-Sakar A."/>
            <person name="Drubin D.G."/>
            <person name="Nogales E."/>
            <person name="Barnes G."/>
        </authorList>
    </citation>
    <scope>FUNCTION</scope>
</reference>
<reference key="7">
    <citation type="journal article" date="2006" name="Nat. Cell Biol.">
        <title>Molecular architecture of a kinetochore-microtubule attachment site.</title>
        <authorList>
            <person name="Joglekar A.P."/>
            <person name="Bouck D.C."/>
            <person name="Molk J.N."/>
            <person name="Bloom K.S."/>
            <person name="Salmon E.D."/>
        </authorList>
    </citation>
    <scope>IDENTIFICATION IN THE DASH COMPLEX</scope>
</reference>
<reference key="8">
    <citation type="journal article" date="2006" name="Proc. Natl. Acad. Sci. U.S.A.">
        <title>The Dam1 kinetochore complex harnesses microtubule dynamics to produce force and movement.</title>
        <authorList>
            <person name="Asbury C.L."/>
            <person name="Gestaut D.R."/>
            <person name="Powers A.F."/>
            <person name="Franck A.D."/>
            <person name="Davis T.N."/>
        </authorList>
    </citation>
    <scope>FUNCTION</scope>
</reference>
<reference key="9">
    <citation type="journal article" date="2007" name="Genes Dev.">
        <title>Kinetochore microtubule interaction during S phase in Saccharomyces cerevisiae.</title>
        <authorList>
            <person name="Kitamura E."/>
            <person name="Tanaka K."/>
            <person name="Kitamura Y."/>
            <person name="Tanaka T.U."/>
        </authorList>
    </citation>
    <scope>FUNCTION</scope>
</reference>
<reference key="10">
    <citation type="journal article" date="2007" name="Mol. Biol. Cell">
        <title>Protein arms in the kinetochore-microtubule interface of the yeast DASH complex.</title>
        <authorList>
            <person name="Miranda J.J."/>
            <person name="King D.S."/>
            <person name="Harrison S.C."/>
        </authorList>
    </citation>
    <scope>FUNCTION</scope>
    <scope>IDENTIFICATION IN THE DASH COMPLEX</scope>
</reference>
<reference key="11">
    <citation type="journal article" date="2012" name="Proc. Natl. Acad. Sci. U.S.A.">
        <title>N-terminal acetylome analyses and functional insights of the N-terminal acetyltransferase NatB.</title>
        <authorList>
            <person name="Van Damme P."/>
            <person name="Lasa M."/>
            <person name="Polevoda B."/>
            <person name="Gazquez C."/>
            <person name="Elosegui-Artola A."/>
            <person name="Kim D.S."/>
            <person name="De Juan-Pardo E."/>
            <person name="Demeyer K."/>
            <person name="Hole K."/>
            <person name="Larrea E."/>
            <person name="Timmerman E."/>
            <person name="Prieto J."/>
            <person name="Arnesen T."/>
            <person name="Sherman F."/>
            <person name="Gevaert K."/>
            <person name="Aldabe R."/>
        </authorList>
    </citation>
    <scope>IDENTIFICATION BY MASS SPECTROMETRY [LARGE SCALE ANALYSIS]</scope>
</reference>
<reference key="12">
    <citation type="journal article" date="2014" name="Nat. Commun.">
        <title>Kinetochores require oligomerization of Dam1 complex to maintain microtubule attachments against tension and promote biorientation.</title>
        <authorList>
            <person name="Umbreit N.T."/>
            <person name="Miller M.P."/>
            <person name="Tien J.F."/>
            <person name="Ortola J.C."/>
            <person name="Gui L."/>
            <person name="Lee K.K."/>
            <person name="Biggins S."/>
            <person name="Asbury C.L."/>
            <person name="Davis T.N."/>
        </authorList>
    </citation>
    <scope>FUNCTION</scope>
    <scope>IDENTIFICATION IN THE DASH COMPLEX</scope>
    <scope>SUBCELLULAR LOCATION</scope>
    <scope>DISRUPTION PHENOTYPE</scope>
</reference>
<reference key="13">
    <citation type="journal article" date="2023" name="Cell Rep.">
        <title>Single-copy locus proteomics of early- and late-firing DNA replication origins identifies a role of Ask1/DASH complex in replication timing control.</title>
        <authorList>
            <person name="Weibeta M."/>
            <person name="Chanou A."/>
            <person name="Schauer T."/>
            <person name="Tvardovskiy A."/>
            <person name="Meiser S."/>
            <person name="Koenig A.C."/>
            <person name="Schmidt T."/>
            <person name="Kruse E."/>
            <person name="Ummethum H."/>
            <person name="Trauner M."/>
            <person name="Werner M."/>
            <person name="Lalonde M."/>
            <person name="Hauck S.M."/>
            <person name="Scialdone A."/>
            <person name="Hamperl S."/>
        </authorList>
    </citation>
    <scope>FUNCTION</scope>
</reference>
<reference key="14">
    <citation type="journal article" date="2005" name="Nat. Struct. Mol. Biol.">
        <title>The yeast DASH complex forms closed rings on microtubules.</title>
        <authorList>
            <person name="Miranda J.L."/>
            <person name="Wulf P.D."/>
            <person name="Sorger P.K."/>
            <person name="Harrison S.C."/>
        </authorList>
    </citation>
    <scope>ELECTRON MICROSCOPY OF DASH COMPLEX ALONE AND BOUND TO MICROTUBULES</scope>
    <scope>FUNCTION</scope>
    <scope>IDENTIFICATION IN THE DASH COMPLEX</scope>
</reference>
<reference key="15">
    <citation type="journal article" date="2007" name="Nat. Struct. Mol. Biol.">
        <title>Architecture of the Dam1 kinetochore ring complex and implications for microtubule-driven assembly and force-coupling mechanisms.</title>
        <authorList>
            <person name="Wang H.W."/>
            <person name="Ramey V.H."/>
            <person name="Westermann S."/>
            <person name="Leschziner A.E."/>
            <person name="Welburn J.P."/>
            <person name="Nakajima Y."/>
            <person name="Drubin D.G."/>
            <person name="Barnes G."/>
            <person name="Nogales E."/>
        </authorList>
    </citation>
    <scope>ELECTRON MICROSCOPY OF DASH COMPLEX</scope>
    <scope>FUNCTION</scope>
    <scope>IDENTIFICATION IN THE DASH COMPLEX</scope>
    <scope>SUBUNIT</scope>
</reference>
<gene>
    <name type="primary">HSK3</name>
    <name type="ordered locus">YKL138C-A</name>
</gene>
<dbReference type="EMBL" id="Z28139">
    <property type="status" value="NOT_ANNOTATED_CDS"/>
    <property type="molecule type" value="Genomic_DNA"/>
</dbReference>
<dbReference type="EMBL" id="BK006944">
    <property type="protein sequence ID" value="DAA09024.1"/>
    <property type="molecule type" value="Genomic_DNA"/>
</dbReference>
<dbReference type="RefSeq" id="NP_690844.1">
    <property type="nucleotide sequence ID" value="NM_001184513.1"/>
</dbReference>
<dbReference type="PDB" id="8Q84">
    <property type="method" value="EM"/>
    <property type="resolution" value="3.15 A"/>
    <property type="chains" value="Q/c=1-69"/>
</dbReference>
<dbReference type="PDB" id="8Q85">
    <property type="method" value="EM"/>
    <property type="resolution" value="3.97 A"/>
    <property type="chains" value="c=1-69"/>
</dbReference>
<dbReference type="PDBsum" id="8Q84"/>
<dbReference type="PDBsum" id="8Q85"/>
<dbReference type="EMDB" id="EMD-18246"/>
<dbReference type="EMDB" id="EMD-18247"/>
<dbReference type="SMR" id="P69852"/>
<dbReference type="BioGRID" id="33998">
    <property type="interactions" value="63"/>
</dbReference>
<dbReference type="ComplexPortal" id="CPX-1041">
    <property type="entry name" value="DASH complex"/>
</dbReference>
<dbReference type="FunCoup" id="P69852">
    <property type="interactions" value="56"/>
</dbReference>
<dbReference type="IntAct" id="P69852">
    <property type="interactions" value="8"/>
</dbReference>
<dbReference type="MINT" id="P69852"/>
<dbReference type="STRING" id="4932.YKL138C-A"/>
<dbReference type="PaxDb" id="4932-YKL138C-A"/>
<dbReference type="PeptideAtlas" id="P69852"/>
<dbReference type="EnsemblFungi" id="YKL138C-A_mRNA">
    <property type="protein sequence ID" value="YKL138C-A"/>
    <property type="gene ID" value="YKL138C-A"/>
</dbReference>
<dbReference type="GeneID" id="853719"/>
<dbReference type="KEGG" id="sce:YKL138C-A"/>
<dbReference type="AGR" id="SGD:S000028421"/>
<dbReference type="SGD" id="S000028421">
    <property type="gene designation" value="HSK3"/>
</dbReference>
<dbReference type="VEuPathDB" id="FungiDB:YKL138C-A"/>
<dbReference type="eggNOG" id="KOG4853">
    <property type="taxonomic scope" value="Eukaryota"/>
</dbReference>
<dbReference type="HOGENOM" id="CLU_193155_0_0_1"/>
<dbReference type="InParanoid" id="P69852"/>
<dbReference type="OMA" id="QCNKNIV"/>
<dbReference type="OrthoDB" id="4040439at2759"/>
<dbReference type="BioCyc" id="YEAST:G3O-32096-MONOMER"/>
<dbReference type="BioGRID-ORCS" id="853719">
    <property type="hits" value="3 hits in 10 CRISPR screens"/>
</dbReference>
<dbReference type="CD-CODE" id="876000F7">
    <property type="entry name" value="Centrosome"/>
</dbReference>
<dbReference type="PRO" id="PR:P69852"/>
<dbReference type="Proteomes" id="UP000002311">
    <property type="component" value="Chromosome XI"/>
</dbReference>
<dbReference type="RNAct" id="P69852">
    <property type="molecule type" value="protein"/>
</dbReference>
<dbReference type="GO" id="GO:0005737">
    <property type="term" value="C:cytoplasm"/>
    <property type="evidence" value="ECO:0007669"/>
    <property type="project" value="UniProtKB-KW"/>
</dbReference>
<dbReference type="GO" id="GO:0042729">
    <property type="term" value="C:DASH complex"/>
    <property type="evidence" value="ECO:0000314"/>
    <property type="project" value="SGD"/>
</dbReference>
<dbReference type="GO" id="GO:0005874">
    <property type="term" value="C:microtubule"/>
    <property type="evidence" value="ECO:0007669"/>
    <property type="project" value="UniProtKB-KW"/>
</dbReference>
<dbReference type="GO" id="GO:0072686">
    <property type="term" value="C:mitotic spindle"/>
    <property type="evidence" value="ECO:0000303"/>
    <property type="project" value="ComplexPortal"/>
</dbReference>
<dbReference type="GO" id="GO:0008608">
    <property type="term" value="P:attachment of spindle microtubules to kinetochore"/>
    <property type="evidence" value="ECO:0000314"/>
    <property type="project" value="SGD"/>
</dbReference>
<dbReference type="GO" id="GO:0051301">
    <property type="term" value="P:cell division"/>
    <property type="evidence" value="ECO:0007669"/>
    <property type="project" value="UniProtKB-KW"/>
</dbReference>
<dbReference type="GO" id="GO:1990758">
    <property type="term" value="P:mitotic sister chromatid biorientation"/>
    <property type="evidence" value="ECO:0000314"/>
    <property type="project" value="ComplexPortal"/>
</dbReference>
<dbReference type="GO" id="GO:0051987">
    <property type="term" value="P:positive regulation of attachment of spindle microtubules to kinetochore"/>
    <property type="evidence" value="ECO:0000314"/>
    <property type="project" value="ComplexPortal"/>
</dbReference>
<dbReference type="GO" id="GO:0031116">
    <property type="term" value="P:positive regulation of microtubule polymerization"/>
    <property type="evidence" value="ECO:0000314"/>
    <property type="project" value="SGD"/>
</dbReference>
<dbReference type="GO" id="GO:1990976">
    <property type="term" value="P:protein transport along microtubule to mitotic spindle pole body"/>
    <property type="evidence" value="ECO:0000315"/>
    <property type="project" value="UniProtKB"/>
</dbReference>
<dbReference type="InterPro" id="IPR042332">
    <property type="entry name" value="Hsk3"/>
</dbReference>
<dbReference type="InterPro" id="IPR013183">
    <property type="entry name" value="Hsk3-like"/>
</dbReference>
<dbReference type="PANTHER" id="PTHR28289">
    <property type="entry name" value="DASH COMPLEX SUBUNIT HSK3"/>
    <property type="match status" value="1"/>
</dbReference>
<dbReference type="PANTHER" id="PTHR28289:SF1">
    <property type="entry name" value="DASH COMPLEX SUBUNIT HSK3"/>
    <property type="match status" value="1"/>
</dbReference>
<dbReference type="Pfam" id="PF08227">
    <property type="entry name" value="DASH_Hsk3"/>
    <property type="match status" value="1"/>
</dbReference>
<keyword id="KW-0002">3D-structure</keyword>
<keyword id="KW-0131">Cell cycle</keyword>
<keyword id="KW-0132">Cell division</keyword>
<keyword id="KW-0137">Centromere</keyword>
<keyword id="KW-0158">Chromosome</keyword>
<keyword id="KW-0159">Chromosome partition</keyword>
<keyword id="KW-0175">Coiled coil</keyword>
<keyword id="KW-0963">Cytoplasm</keyword>
<keyword id="KW-0206">Cytoskeleton</keyword>
<keyword id="KW-0995">Kinetochore</keyword>
<keyword id="KW-0493">Microtubule</keyword>
<keyword id="KW-0498">Mitosis</keyword>
<keyword id="KW-0539">Nucleus</keyword>
<keyword id="KW-1185">Reference proteome</keyword>
<organism>
    <name type="scientific">Saccharomyces cerevisiae (strain ATCC 204508 / S288c)</name>
    <name type="common">Baker's yeast</name>
    <dbReference type="NCBI Taxonomy" id="559292"/>
    <lineage>
        <taxon>Eukaryota</taxon>
        <taxon>Fungi</taxon>
        <taxon>Dikarya</taxon>
        <taxon>Ascomycota</taxon>
        <taxon>Saccharomycotina</taxon>
        <taxon>Saccharomycetes</taxon>
        <taxon>Saccharomycetales</taxon>
        <taxon>Saccharomycetaceae</taxon>
        <taxon>Saccharomyces</taxon>
    </lineage>
</organism>
<accession>P69852</accession>
<accession>D6VX58</accession>
<name>HSK3_YEAST</name>
<sequence length="69" mass="8088">MNANKQRQYNQLAHELRELQTNLQETTKQLDIMSKQCNENLVGQLGKVHGSWLIGSYIYYMEQMLGKTQ</sequence>
<feature type="chain" id="PRO_0000084079" description="DASH complex subunit HSK3">
    <location>
        <begin position="1"/>
        <end position="69"/>
    </location>
</feature>
<feature type="coiled-coil region" evidence="2">
    <location>
        <begin position="1"/>
        <end position="39"/>
    </location>
</feature>
<proteinExistence type="evidence at protein level"/>